<dbReference type="EMBL" id="CR382134">
    <property type="protein sequence ID" value="CAG85363.1"/>
    <property type="molecule type" value="Genomic_DNA"/>
</dbReference>
<dbReference type="RefSeq" id="XP_457359.1">
    <property type="nucleotide sequence ID" value="XM_457359.1"/>
</dbReference>
<dbReference type="SMR" id="Q6BWR0"/>
<dbReference type="FunCoup" id="Q6BWR0">
    <property type="interactions" value="325"/>
</dbReference>
<dbReference type="STRING" id="284592.Q6BWR0"/>
<dbReference type="GeneID" id="2913282"/>
<dbReference type="KEGG" id="dha:DEHA2B09394g"/>
<dbReference type="VEuPathDB" id="FungiDB:DEHA2B09394g"/>
<dbReference type="eggNOG" id="KOG4771">
    <property type="taxonomic scope" value="Eukaryota"/>
</dbReference>
<dbReference type="HOGENOM" id="CLU_078857_0_0_1"/>
<dbReference type="InParanoid" id="Q6BWR0"/>
<dbReference type="OMA" id="MQQTEAD"/>
<dbReference type="OrthoDB" id="285729at2759"/>
<dbReference type="Proteomes" id="UP000000599">
    <property type="component" value="Chromosome B"/>
</dbReference>
<dbReference type="GO" id="GO:0005730">
    <property type="term" value="C:nucleolus"/>
    <property type="evidence" value="ECO:0007669"/>
    <property type="project" value="UniProtKB-SubCell"/>
</dbReference>
<dbReference type="GO" id="GO:0030687">
    <property type="term" value="C:preribosome, large subunit precursor"/>
    <property type="evidence" value="ECO:0007669"/>
    <property type="project" value="EnsemblFungi"/>
</dbReference>
<dbReference type="GO" id="GO:0042273">
    <property type="term" value="P:ribosomal large subunit biogenesis"/>
    <property type="evidence" value="ECO:0007669"/>
    <property type="project" value="EnsemblFungi"/>
</dbReference>
<dbReference type="GO" id="GO:0006364">
    <property type="term" value="P:rRNA processing"/>
    <property type="evidence" value="ECO:0007669"/>
    <property type="project" value="UniProtKB-KW"/>
</dbReference>
<dbReference type="InterPro" id="IPR019002">
    <property type="entry name" value="Ribosome_biogenesis_Nop16"/>
</dbReference>
<dbReference type="PANTHER" id="PTHR13243">
    <property type="entry name" value="HSPC111 PROTEIN-RELATED"/>
    <property type="match status" value="1"/>
</dbReference>
<dbReference type="PANTHER" id="PTHR13243:SF1">
    <property type="entry name" value="NUCLEOLAR PROTEIN 16"/>
    <property type="match status" value="1"/>
</dbReference>
<dbReference type="Pfam" id="PF09420">
    <property type="entry name" value="Nop16"/>
    <property type="match status" value="1"/>
</dbReference>
<organism>
    <name type="scientific">Debaryomyces hansenii (strain ATCC 36239 / CBS 767 / BCRC 21394 / JCM 1990 / NBRC 0083 / IGC 2968)</name>
    <name type="common">Yeast</name>
    <name type="synonym">Torulaspora hansenii</name>
    <dbReference type="NCBI Taxonomy" id="284592"/>
    <lineage>
        <taxon>Eukaryota</taxon>
        <taxon>Fungi</taxon>
        <taxon>Dikarya</taxon>
        <taxon>Ascomycota</taxon>
        <taxon>Saccharomycotina</taxon>
        <taxon>Pichiomycetes</taxon>
        <taxon>Debaryomycetaceae</taxon>
        <taxon>Debaryomyces</taxon>
    </lineage>
</organism>
<evidence type="ECO:0000250" key="1"/>
<evidence type="ECO:0000256" key="2">
    <source>
        <dbReference type="SAM" id="MobiDB-lite"/>
    </source>
</evidence>
<evidence type="ECO:0000305" key="3"/>
<comment type="function">
    <text evidence="1">Involved in the biogenesis of the 60S ribosomal subunit.</text>
</comment>
<comment type="subunit">
    <text evidence="1">Component of the pre-66S ribosomal particle.</text>
</comment>
<comment type="subcellular location">
    <subcellularLocation>
        <location evidence="1">Nucleus</location>
        <location evidence="1">Nucleolus</location>
    </subcellularLocation>
</comment>
<comment type="similarity">
    <text evidence="3">Belongs to the NOP16 family.</text>
</comment>
<feature type="chain" id="PRO_0000320375" description="Nucleolar protein 16">
    <location>
        <begin position="1"/>
        <end position="210"/>
    </location>
</feature>
<feature type="region of interest" description="Disordered" evidence="2">
    <location>
        <begin position="1"/>
        <end position="27"/>
    </location>
</feature>
<gene>
    <name type="primary">NOP16</name>
    <name type="ordered locus">DEHA2B09394g</name>
</gene>
<protein>
    <recommendedName>
        <fullName>Nucleolar protein 16</fullName>
    </recommendedName>
</protein>
<accession>Q6BWR0</accession>
<keyword id="KW-0539">Nucleus</keyword>
<keyword id="KW-1185">Reference proteome</keyword>
<keyword id="KW-0687">Ribonucleoprotein</keyword>
<keyword id="KW-0690">Ribosome biogenesis</keyword>
<keyword id="KW-0698">rRNA processing</keyword>
<reference key="1">
    <citation type="journal article" date="2004" name="Nature">
        <title>Genome evolution in yeasts.</title>
        <authorList>
            <person name="Dujon B."/>
            <person name="Sherman D."/>
            <person name="Fischer G."/>
            <person name="Durrens P."/>
            <person name="Casaregola S."/>
            <person name="Lafontaine I."/>
            <person name="de Montigny J."/>
            <person name="Marck C."/>
            <person name="Neuveglise C."/>
            <person name="Talla E."/>
            <person name="Goffard N."/>
            <person name="Frangeul L."/>
            <person name="Aigle M."/>
            <person name="Anthouard V."/>
            <person name="Babour A."/>
            <person name="Barbe V."/>
            <person name="Barnay S."/>
            <person name="Blanchin S."/>
            <person name="Beckerich J.-M."/>
            <person name="Beyne E."/>
            <person name="Bleykasten C."/>
            <person name="Boisrame A."/>
            <person name="Boyer J."/>
            <person name="Cattolico L."/>
            <person name="Confanioleri F."/>
            <person name="de Daruvar A."/>
            <person name="Despons L."/>
            <person name="Fabre E."/>
            <person name="Fairhead C."/>
            <person name="Ferry-Dumazet H."/>
            <person name="Groppi A."/>
            <person name="Hantraye F."/>
            <person name="Hennequin C."/>
            <person name="Jauniaux N."/>
            <person name="Joyet P."/>
            <person name="Kachouri R."/>
            <person name="Kerrest A."/>
            <person name="Koszul R."/>
            <person name="Lemaire M."/>
            <person name="Lesur I."/>
            <person name="Ma L."/>
            <person name="Muller H."/>
            <person name="Nicaud J.-M."/>
            <person name="Nikolski M."/>
            <person name="Oztas S."/>
            <person name="Ozier-Kalogeropoulos O."/>
            <person name="Pellenz S."/>
            <person name="Potier S."/>
            <person name="Richard G.-F."/>
            <person name="Straub M.-L."/>
            <person name="Suleau A."/>
            <person name="Swennen D."/>
            <person name="Tekaia F."/>
            <person name="Wesolowski-Louvel M."/>
            <person name="Westhof E."/>
            <person name="Wirth B."/>
            <person name="Zeniou-Meyer M."/>
            <person name="Zivanovic Y."/>
            <person name="Bolotin-Fukuhara M."/>
            <person name="Thierry A."/>
            <person name="Bouchier C."/>
            <person name="Caudron B."/>
            <person name="Scarpelli C."/>
            <person name="Gaillardin C."/>
            <person name="Weissenbach J."/>
            <person name="Wincker P."/>
            <person name="Souciet J.-L."/>
        </authorList>
    </citation>
    <scope>NUCLEOTIDE SEQUENCE [LARGE SCALE GENOMIC DNA]</scope>
    <source>
        <strain>ATCC 36239 / CBS 767 / BCRC 21394 / JCM 1990 / NBRC 0083 / IGC 2968</strain>
    </source>
</reference>
<name>NOP16_DEBHA</name>
<sequence length="210" mass="24018">MTSVRKRKMNRSSVRKNTRRVKDKKKNINIHSNPIIAANWDKSLTLQQNYKKLGLRAKLGTLAGGKEQDVKTLSEIKAADAASKPSLADIEQTTDPAKIPEGEARIIRDPETNEVTSVIYGTMKVGPKAETEGESSSVIKQLEEYAQKHAQVKKERKPSARENEWLEKLHEKHGDDYDKMMWDKKLNIYQQSAGDLRRRITKWKKAHNVE</sequence>
<proteinExistence type="inferred from homology"/>